<proteinExistence type="inferred from homology"/>
<feature type="chain" id="PRO_0000266274" description="CTP synthase">
    <location>
        <begin position="1"/>
        <end position="533"/>
    </location>
</feature>
<feature type="domain" description="Glutamine amidotransferase type-1" evidence="1">
    <location>
        <begin position="289"/>
        <end position="533"/>
    </location>
</feature>
<feature type="region of interest" description="Amidoligase domain" evidence="1">
    <location>
        <begin position="1"/>
        <end position="264"/>
    </location>
</feature>
<feature type="active site" description="Nucleophile; for glutamine hydrolysis" evidence="1">
    <location>
        <position position="384"/>
    </location>
</feature>
<feature type="active site" evidence="1">
    <location>
        <position position="509"/>
    </location>
</feature>
<feature type="active site" evidence="1">
    <location>
        <position position="511"/>
    </location>
</feature>
<feature type="binding site" evidence="1">
    <location>
        <position position="12"/>
    </location>
    <ligand>
        <name>CTP</name>
        <dbReference type="ChEBI" id="CHEBI:37563"/>
        <note>allosteric inhibitor</note>
    </ligand>
</feature>
<feature type="binding site" evidence="1">
    <location>
        <position position="12"/>
    </location>
    <ligand>
        <name>UTP</name>
        <dbReference type="ChEBI" id="CHEBI:46398"/>
    </ligand>
</feature>
<feature type="binding site" evidence="1">
    <location>
        <begin position="13"/>
        <end position="18"/>
    </location>
    <ligand>
        <name>ATP</name>
        <dbReference type="ChEBI" id="CHEBI:30616"/>
    </ligand>
</feature>
<feature type="binding site" evidence="1">
    <location>
        <position position="70"/>
    </location>
    <ligand>
        <name>ATP</name>
        <dbReference type="ChEBI" id="CHEBI:30616"/>
    </ligand>
</feature>
<feature type="binding site" evidence="1">
    <location>
        <position position="70"/>
    </location>
    <ligand>
        <name>Mg(2+)</name>
        <dbReference type="ChEBI" id="CHEBI:18420"/>
    </ligand>
</feature>
<feature type="binding site" evidence="1">
    <location>
        <position position="138"/>
    </location>
    <ligand>
        <name>Mg(2+)</name>
        <dbReference type="ChEBI" id="CHEBI:18420"/>
    </ligand>
</feature>
<feature type="binding site" evidence="1">
    <location>
        <begin position="145"/>
        <end position="147"/>
    </location>
    <ligand>
        <name>CTP</name>
        <dbReference type="ChEBI" id="CHEBI:37563"/>
        <note>allosteric inhibitor</note>
    </ligand>
</feature>
<feature type="binding site" evidence="1">
    <location>
        <begin position="185"/>
        <end position="190"/>
    </location>
    <ligand>
        <name>CTP</name>
        <dbReference type="ChEBI" id="CHEBI:37563"/>
        <note>allosteric inhibitor</note>
    </ligand>
</feature>
<feature type="binding site" evidence="1">
    <location>
        <begin position="185"/>
        <end position="190"/>
    </location>
    <ligand>
        <name>UTP</name>
        <dbReference type="ChEBI" id="CHEBI:46398"/>
    </ligand>
</feature>
<feature type="binding site" evidence="1">
    <location>
        <position position="221"/>
    </location>
    <ligand>
        <name>CTP</name>
        <dbReference type="ChEBI" id="CHEBI:37563"/>
        <note>allosteric inhibitor</note>
    </ligand>
</feature>
<feature type="binding site" evidence="1">
    <location>
        <position position="221"/>
    </location>
    <ligand>
        <name>UTP</name>
        <dbReference type="ChEBI" id="CHEBI:46398"/>
    </ligand>
</feature>
<feature type="binding site" evidence="1">
    <location>
        <begin position="237"/>
        <end position="239"/>
    </location>
    <ligand>
        <name>ATP</name>
        <dbReference type="ChEBI" id="CHEBI:30616"/>
    </ligand>
</feature>
<feature type="binding site" evidence="1">
    <location>
        <position position="357"/>
    </location>
    <ligand>
        <name>L-glutamine</name>
        <dbReference type="ChEBI" id="CHEBI:58359"/>
    </ligand>
</feature>
<feature type="binding site" evidence="1">
    <location>
        <begin position="385"/>
        <end position="388"/>
    </location>
    <ligand>
        <name>L-glutamine</name>
        <dbReference type="ChEBI" id="CHEBI:58359"/>
    </ligand>
</feature>
<feature type="binding site" evidence="1">
    <location>
        <position position="407"/>
    </location>
    <ligand>
        <name>L-glutamine</name>
        <dbReference type="ChEBI" id="CHEBI:58359"/>
    </ligand>
</feature>
<feature type="binding site" evidence="1">
    <location>
        <position position="464"/>
    </location>
    <ligand>
        <name>L-glutamine</name>
        <dbReference type="ChEBI" id="CHEBI:58359"/>
    </ligand>
</feature>
<organism>
    <name type="scientific">Methanococcus maripaludis (strain DSM 14266 / JCM 13030 / NBRC 101832 / S2 / LL)</name>
    <dbReference type="NCBI Taxonomy" id="267377"/>
    <lineage>
        <taxon>Archaea</taxon>
        <taxon>Methanobacteriati</taxon>
        <taxon>Methanobacteriota</taxon>
        <taxon>Methanomada group</taxon>
        <taxon>Methanococci</taxon>
        <taxon>Methanococcales</taxon>
        <taxon>Methanococcaceae</taxon>
        <taxon>Methanococcus</taxon>
    </lineage>
</organism>
<protein>
    <recommendedName>
        <fullName evidence="1">CTP synthase</fullName>
        <ecNumber evidence="1">6.3.4.2</ecNumber>
    </recommendedName>
    <alternativeName>
        <fullName evidence="1">Cytidine 5'-triphosphate synthase</fullName>
    </alternativeName>
    <alternativeName>
        <fullName evidence="1">Cytidine triphosphate synthetase</fullName>
        <shortName evidence="1">CTP synthetase</shortName>
        <shortName evidence="1">CTPS</shortName>
    </alternativeName>
    <alternativeName>
        <fullName evidence="1">UTP--ammonia ligase</fullName>
    </alternativeName>
</protein>
<gene>
    <name evidence="1" type="primary">pyrG</name>
    <name type="ordered locus">MMP0893</name>
</gene>
<sequence>MKYIFVTGGVVSSLGKGITSSSLGRLLKARGLNVNMIKIDPYLQIDAGTMSPFEHGEVFVTDDGGETDLDLGNYERFVDIGLKADNNITTGKIYWSVLSKERKGDYLGKTVQVIPHITNEIKDRIKNLGKESDITIIEIGGTVGDIESLPFLEAIRQFKKDVGKENVLYIHVSLLPYIRSAGELKTKPTQHSVKELKGIGIQPDILVCRSEIPISEKIKDKLALFCDVEKEAVIECKDARTIYEVPLNLEKEGLGKLVTEKLNLRDSTPDLTEWRAIVDRIINPMNEITIGIVGKYIELKDSYMSIMEALGHAGAKNDTKVNIAWINSEELETKNYEEILNKMVDDEKLHGILVPGGFGDRGIDGKVNAVRYAREKNIPFLGICLGMQCAVIEFARHVCGLNANSTEFDEETEHPVIDYIPEQREVTEKGGTMRLGAYPAVLTENSLASELYGSINASERHRHRYEVNPEYHEILKKNGLIISGMSPDGKLAEFIELENHKYFIATQAHPEFKSRPNKPHPLFHGLVKASIEK</sequence>
<reference key="1">
    <citation type="journal article" date="2004" name="J. Bacteriol.">
        <title>Complete genome sequence of the genetically tractable hydrogenotrophic methanogen Methanococcus maripaludis.</title>
        <authorList>
            <person name="Hendrickson E.L."/>
            <person name="Kaul R."/>
            <person name="Zhou Y."/>
            <person name="Bovee D."/>
            <person name="Chapman P."/>
            <person name="Chung J."/>
            <person name="Conway de Macario E."/>
            <person name="Dodsworth J.A."/>
            <person name="Gillett W."/>
            <person name="Graham D.E."/>
            <person name="Hackett M."/>
            <person name="Haydock A.K."/>
            <person name="Kang A."/>
            <person name="Land M.L."/>
            <person name="Levy R."/>
            <person name="Lie T.J."/>
            <person name="Major T.A."/>
            <person name="Moore B.C."/>
            <person name="Porat I."/>
            <person name="Palmeiri A."/>
            <person name="Rouse G."/>
            <person name="Saenphimmachak C."/>
            <person name="Soell D."/>
            <person name="Van Dien S."/>
            <person name="Wang T."/>
            <person name="Whitman W.B."/>
            <person name="Xia Q."/>
            <person name="Zhang Y."/>
            <person name="Larimer F.W."/>
            <person name="Olson M.V."/>
            <person name="Leigh J.A."/>
        </authorList>
    </citation>
    <scope>NUCLEOTIDE SEQUENCE [LARGE SCALE GENOMIC DNA]</scope>
    <source>
        <strain>DSM 14266 / JCM 13030 / NBRC 101832 / S2 / LL</strain>
    </source>
</reference>
<name>PYRG_METMP</name>
<keyword id="KW-0067">ATP-binding</keyword>
<keyword id="KW-0315">Glutamine amidotransferase</keyword>
<keyword id="KW-0436">Ligase</keyword>
<keyword id="KW-0460">Magnesium</keyword>
<keyword id="KW-0479">Metal-binding</keyword>
<keyword id="KW-0547">Nucleotide-binding</keyword>
<keyword id="KW-0665">Pyrimidine biosynthesis</keyword>
<keyword id="KW-1185">Reference proteome</keyword>
<comment type="function">
    <text evidence="1">Catalyzes the ATP-dependent amination of UTP to CTP with either L-glutamine or ammonia as the source of nitrogen. Regulates intracellular CTP levels through interactions with the four ribonucleotide triphosphates.</text>
</comment>
<comment type="catalytic activity">
    <reaction evidence="1">
        <text>UTP + L-glutamine + ATP + H2O = CTP + L-glutamate + ADP + phosphate + 2 H(+)</text>
        <dbReference type="Rhea" id="RHEA:26426"/>
        <dbReference type="ChEBI" id="CHEBI:15377"/>
        <dbReference type="ChEBI" id="CHEBI:15378"/>
        <dbReference type="ChEBI" id="CHEBI:29985"/>
        <dbReference type="ChEBI" id="CHEBI:30616"/>
        <dbReference type="ChEBI" id="CHEBI:37563"/>
        <dbReference type="ChEBI" id="CHEBI:43474"/>
        <dbReference type="ChEBI" id="CHEBI:46398"/>
        <dbReference type="ChEBI" id="CHEBI:58359"/>
        <dbReference type="ChEBI" id="CHEBI:456216"/>
        <dbReference type="EC" id="6.3.4.2"/>
    </reaction>
</comment>
<comment type="catalytic activity">
    <reaction evidence="1">
        <text>L-glutamine + H2O = L-glutamate + NH4(+)</text>
        <dbReference type="Rhea" id="RHEA:15889"/>
        <dbReference type="ChEBI" id="CHEBI:15377"/>
        <dbReference type="ChEBI" id="CHEBI:28938"/>
        <dbReference type="ChEBI" id="CHEBI:29985"/>
        <dbReference type="ChEBI" id="CHEBI:58359"/>
    </reaction>
</comment>
<comment type="catalytic activity">
    <reaction evidence="1">
        <text>UTP + NH4(+) + ATP = CTP + ADP + phosphate + 2 H(+)</text>
        <dbReference type="Rhea" id="RHEA:16597"/>
        <dbReference type="ChEBI" id="CHEBI:15378"/>
        <dbReference type="ChEBI" id="CHEBI:28938"/>
        <dbReference type="ChEBI" id="CHEBI:30616"/>
        <dbReference type="ChEBI" id="CHEBI:37563"/>
        <dbReference type="ChEBI" id="CHEBI:43474"/>
        <dbReference type="ChEBI" id="CHEBI:46398"/>
        <dbReference type="ChEBI" id="CHEBI:456216"/>
    </reaction>
</comment>
<comment type="activity regulation">
    <text evidence="1">Allosterically activated by GTP, when glutamine is the substrate; GTP has no effect on the reaction when ammonia is the substrate. The allosteric effector GTP functions by stabilizing the protein conformation that binds the tetrahedral intermediate(s) formed during glutamine hydrolysis. Inhibited by the product CTP, via allosteric rather than competitive inhibition.</text>
</comment>
<comment type="pathway">
    <text evidence="1">Pyrimidine metabolism; CTP biosynthesis via de novo pathway; CTP from UDP: step 2/2.</text>
</comment>
<comment type="subunit">
    <text evidence="1">Homotetramer.</text>
</comment>
<comment type="miscellaneous">
    <text evidence="1">CTPSs have evolved a hybrid strategy for distinguishing between UTP and CTP. The overlapping regions of the product feedback inhibitory and substrate sites recognize a common feature in both compounds, the triphosphate moiety. To differentiate isosteric substrate and product pyrimidine rings, an additional pocket far from the expected kinase/ligase catalytic site, specifically recognizes the cytosine and ribose portions of the product inhibitor.</text>
</comment>
<comment type="similarity">
    <text evidence="1">Belongs to the CTP synthase family.</text>
</comment>
<accession>Q6LYU4</accession>
<dbReference type="EC" id="6.3.4.2" evidence="1"/>
<dbReference type="EMBL" id="BX950229">
    <property type="protein sequence ID" value="CAF30449.1"/>
    <property type="molecule type" value="Genomic_DNA"/>
</dbReference>
<dbReference type="RefSeq" id="WP_011170837.1">
    <property type="nucleotide sequence ID" value="NC_005791.1"/>
</dbReference>
<dbReference type="SMR" id="Q6LYU4"/>
<dbReference type="STRING" id="267377.MMP0893"/>
<dbReference type="EnsemblBacteria" id="CAF30449">
    <property type="protein sequence ID" value="CAF30449"/>
    <property type="gene ID" value="MMP0893"/>
</dbReference>
<dbReference type="GeneID" id="2761197"/>
<dbReference type="KEGG" id="mmp:MMP0893"/>
<dbReference type="PATRIC" id="fig|267377.15.peg.919"/>
<dbReference type="eggNOG" id="arCOG00063">
    <property type="taxonomic scope" value="Archaea"/>
</dbReference>
<dbReference type="HOGENOM" id="CLU_011675_5_0_2"/>
<dbReference type="OrthoDB" id="52769at2157"/>
<dbReference type="UniPathway" id="UPA00159">
    <property type="reaction ID" value="UER00277"/>
</dbReference>
<dbReference type="Proteomes" id="UP000000590">
    <property type="component" value="Chromosome"/>
</dbReference>
<dbReference type="GO" id="GO:0005829">
    <property type="term" value="C:cytosol"/>
    <property type="evidence" value="ECO:0007669"/>
    <property type="project" value="TreeGrafter"/>
</dbReference>
<dbReference type="GO" id="GO:0005524">
    <property type="term" value="F:ATP binding"/>
    <property type="evidence" value="ECO:0007669"/>
    <property type="project" value="UniProtKB-KW"/>
</dbReference>
<dbReference type="GO" id="GO:0003883">
    <property type="term" value="F:CTP synthase activity"/>
    <property type="evidence" value="ECO:0007669"/>
    <property type="project" value="UniProtKB-UniRule"/>
</dbReference>
<dbReference type="GO" id="GO:0004359">
    <property type="term" value="F:glutaminase activity"/>
    <property type="evidence" value="ECO:0007669"/>
    <property type="project" value="RHEA"/>
</dbReference>
<dbReference type="GO" id="GO:0042802">
    <property type="term" value="F:identical protein binding"/>
    <property type="evidence" value="ECO:0007669"/>
    <property type="project" value="TreeGrafter"/>
</dbReference>
<dbReference type="GO" id="GO:0046872">
    <property type="term" value="F:metal ion binding"/>
    <property type="evidence" value="ECO:0007669"/>
    <property type="project" value="UniProtKB-KW"/>
</dbReference>
<dbReference type="GO" id="GO:0044210">
    <property type="term" value="P:'de novo' CTP biosynthetic process"/>
    <property type="evidence" value="ECO:0007669"/>
    <property type="project" value="UniProtKB-UniRule"/>
</dbReference>
<dbReference type="GO" id="GO:0019856">
    <property type="term" value="P:pyrimidine nucleobase biosynthetic process"/>
    <property type="evidence" value="ECO:0007669"/>
    <property type="project" value="TreeGrafter"/>
</dbReference>
<dbReference type="CDD" id="cd03113">
    <property type="entry name" value="CTPS_N"/>
    <property type="match status" value="1"/>
</dbReference>
<dbReference type="CDD" id="cd01746">
    <property type="entry name" value="GATase1_CTP_Synthase"/>
    <property type="match status" value="1"/>
</dbReference>
<dbReference type="FunFam" id="3.40.50.300:FF:000009">
    <property type="entry name" value="CTP synthase"/>
    <property type="match status" value="1"/>
</dbReference>
<dbReference type="FunFam" id="3.40.50.880:FF:000002">
    <property type="entry name" value="CTP synthase"/>
    <property type="match status" value="1"/>
</dbReference>
<dbReference type="Gene3D" id="3.40.50.880">
    <property type="match status" value="1"/>
</dbReference>
<dbReference type="Gene3D" id="3.40.50.300">
    <property type="entry name" value="P-loop containing nucleotide triphosphate hydrolases"/>
    <property type="match status" value="1"/>
</dbReference>
<dbReference type="HAMAP" id="MF_01227">
    <property type="entry name" value="PyrG"/>
    <property type="match status" value="1"/>
</dbReference>
<dbReference type="InterPro" id="IPR029062">
    <property type="entry name" value="Class_I_gatase-like"/>
</dbReference>
<dbReference type="InterPro" id="IPR004468">
    <property type="entry name" value="CTP_synthase"/>
</dbReference>
<dbReference type="InterPro" id="IPR017456">
    <property type="entry name" value="CTP_synthase_N"/>
</dbReference>
<dbReference type="InterPro" id="IPR017926">
    <property type="entry name" value="GATASE"/>
</dbReference>
<dbReference type="InterPro" id="IPR033828">
    <property type="entry name" value="GATase1_CTP_Synthase"/>
</dbReference>
<dbReference type="InterPro" id="IPR027417">
    <property type="entry name" value="P-loop_NTPase"/>
</dbReference>
<dbReference type="NCBIfam" id="NF003792">
    <property type="entry name" value="PRK05380.1"/>
    <property type="match status" value="1"/>
</dbReference>
<dbReference type="NCBIfam" id="TIGR00337">
    <property type="entry name" value="PyrG"/>
    <property type="match status" value="1"/>
</dbReference>
<dbReference type="PANTHER" id="PTHR11550">
    <property type="entry name" value="CTP SYNTHASE"/>
    <property type="match status" value="1"/>
</dbReference>
<dbReference type="PANTHER" id="PTHR11550:SF0">
    <property type="entry name" value="CTP SYNTHASE-RELATED"/>
    <property type="match status" value="1"/>
</dbReference>
<dbReference type="Pfam" id="PF06418">
    <property type="entry name" value="CTP_synth_N"/>
    <property type="match status" value="1"/>
</dbReference>
<dbReference type="Pfam" id="PF00117">
    <property type="entry name" value="GATase"/>
    <property type="match status" value="1"/>
</dbReference>
<dbReference type="SUPFAM" id="SSF52317">
    <property type="entry name" value="Class I glutamine amidotransferase-like"/>
    <property type="match status" value="1"/>
</dbReference>
<dbReference type="SUPFAM" id="SSF52540">
    <property type="entry name" value="P-loop containing nucleoside triphosphate hydrolases"/>
    <property type="match status" value="1"/>
</dbReference>
<dbReference type="PROSITE" id="PS51273">
    <property type="entry name" value="GATASE_TYPE_1"/>
    <property type="match status" value="1"/>
</dbReference>
<evidence type="ECO:0000255" key="1">
    <source>
        <dbReference type="HAMAP-Rule" id="MF_01227"/>
    </source>
</evidence>